<dbReference type="EC" id="2.1.1.244"/>
<dbReference type="EMBL" id="AAFI02000005">
    <property type="protein sequence ID" value="EAL72179.1"/>
    <property type="molecule type" value="Genomic_DNA"/>
</dbReference>
<dbReference type="RefSeq" id="XP_646155.1">
    <property type="nucleotide sequence ID" value="XM_641063.1"/>
</dbReference>
<dbReference type="SMR" id="Q55DH6"/>
<dbReference type="FunCoup" id="Q55DH6">
    <property type="interactions" value="681"/>
</dbReference>
<dbReference type="PaxDb" id="44689-DDB0190440"/>
<dbReference type="EnsemblProtists" id="EAL72179">
    <property type="protein sequence ID" value="EAL72179"/>
    <property type="gene ID" value="DDB_G0269658"/>
</dbReference>
<dbReference type="GeneID" id="8617106"/>
<dbReference type="KEGG" id="ddi:DDB_G0269658"/>
<dbReference type="dictyBase" id="DDB_G0269658"/>
<dbReference type="VEuPathDB" id="AmoebaDB:DDB_G0269658"/>
<dbReference type="eggNOG" id="KOG3178">
    <property type="taxonomic scope" value="Eukaryota"/>
</dbReference>
<dbReference type="HOGENOM" id="CLU_055356_3_1_1"/>
<dbReference type="InParanoid" id="Q55DH6"/>
<dbReference type="OMA" id="PVRMYCL"/>
<dbReference type="PhylomeDB" id="Q55DH6"/>
<dbReference type="PRO" id="PR:Q55DH6"/>
<dbReference type="Proteomes" id="UP000002195">
    <property type="component" value="Chromosome 1"/>
</dbReference>
<dbReference type="GO" id="GO:0005737">
    <property type="term" value="C:cytoplasm"/>
    <property type="evidence" value="ECO:0000318"/>
    <property type="project" value="GO_Central"/>
</dbReference>
<dbReference type="GO" id="GO:0008168">
    <property type="term" value="F:methyltransferase activity"/>
    <property type="evidence" value="ECO:0000318"/>
    <property type="project" value="GO_Central"/>
</dbReference>
<dbReference type="GO" id="GO:0071885">
    <property type="term" value="F:N-terminal protein N-methyltransferase activity"/>
    <property type="evidence" value="ECO:0007669"/>
    <property type="project" value="UniProtKB-EC"/>
</dbReference>
<dbReference type="GO" id="GO:0032259">
    <property type="term" value="P:methylation"/>
    <property type="evidence" value="ECO:0007669"/>
    <property type="project" value="UniProtKB-KW"/>
</dbReference>
<dbReference type="CDD" id="cd02440">
    <property type="entry name" value="AdoMet_MTases"/>
    <property type="match status" value="1"/>
</dbReference>
<dbReference type="FunFam" id="3.40.50.150:FF:000365">
    <property type="entry name" value="Unplaced genomic scaffold supercont1.14, whole genome shotgun sequence"/>
    <property type="match status" value="1"/>
</dbReference>
<dbReference type="Gene3D" id="3.40.50.150">
    <property type="entry name" value="Vaccinia Virus protein VP39"/>
    <property type="match status" value="1"/>
</dbReference>
<dbReference type="InterPro" id="IPR008576">
    <property type="entry name" value="MeTrfase_NTM1"/>
</dbReference>
<dbReference type="InterPro" id="IPR029063">
    <property type="entry name" value="SAM-dependent_MTases_sf"/>
</dbReference>
<dbReference type="PANTHER" id="PTHR12753">
    <property type="entry name" value="AD-003 - RELATED"/>
    <property type="match status" value="1"/>
</dbReference>
<dbReference type="PANTHER" id="PTHR12753:SF0">
    <property type="entry name" value="ALPHA N-TERMINAL PROTEIN METHYLTRANSFERASE 1"/>
    <property type="match status" value="1"/>
</dbReference>
<dbReference type="Pfam" id="PF05891">
    <property type="entry name" value="Methyltransf_PK"/>
    <property type="match status" value="1"/>
</dbReference>
<dbReference type="PIRSF" id="PIRSF016958">
    <property type="entry name" value="DUF858_MeTrfase_lik"/>
    <property type="match status" value="1"/>
</dbReference>
<dbReference type="SUPFAM" id="SSF53335">
    <property type="entry name" value="S-adenosyl-L-methionine-dependent methyltransferases"/>
    <property type="match status" value="1"/>
</dbReference>
<sequence>MTIKNEEQQQQTNKLKYPKNLLSSGLDGEGNTYINIEDLWKKELEGKDNKMEDKWYKSADEYWKGVEATVDGMLGGLAQVSPIDVVASKVFIQDFIKGTDSRPPINLNLALDCGAGIGRVAKEFLLPIGFKNVDLVEQNKLFLDKAKSDNFKDDNRVENYYAVGLQDFTFEKKYDCIWIQWVIGHLHDLDFIEFLKKCMDSLTPNGIICIKDNCAKKRFIMDKEDNSVSRTEDHLKYLFDQAGCKLLKSMVQPNFPKELFPVLMFALERK</sequence>
<reference key="1">
    <citation type="journal article" date="2005" name="Nature">
        <title>The genome of the social amoeba Dictyostelium discoideum.</title>
        <authorList>
            <person name="Eichinger L."/>
            <person name="Pachebat J.A."/>
            <person name="Gloeckner G."/>
            <person name="Rajandream M.A."/>
            <person name="Sucgang R."/>
            <person name="Berriman M."/>
            <person name="Song J."/>
            <person name="Olsen R."/>
            <person name="Szafranski K."/>
            <person name="Xu Q."/>
            <person name="Tunggal B."/>
            <person name="Kummerfeld S."/>
            <person name="Madera M."/>
            <person name="Konfortov B.A."/>
            <person name="Rivero F."/>
            <person name="Bankier A.T."/>
            <person name="Lehmann R."/>
            <person name="Hamlin N."/>
            <person name="Davies R."/>
            <person name="Gaudet P."/>
            <person name="Fey P."/>
            <person name="Pilcher K."/>
            <person name="Chen G."/>
            <person name="Saunders D."/>
            <person name="Sodergren E.J."/>
            <person name="Davis P."/>
            <person name="Kerhornou A."/>
            <person name="Nie X."/>
            <person name="Hall N."/>
            <person name="Anjard C."/>
            <person name="Hemphill L."/>
            <person name="Bason N."/>
            <person name="Farbrother P."/>
            <person name="Desany B."/>
            <person name="Just E."/>
            <person name="Morio T."/>
            <person name="Rost R."/>
            <person name="Churcher C.M."/>
            <person name="Cooper J."/>
            <person name="Haydock S."/>
            <person name="van Driessche N."/>
            <person name="Cronin A."/>
            <person name="Goodhead I."/>
            <person name="Muzny D.M."/>
            <person name="Mourier T."/>
            <person name="Pain A."/>
            <person name="Lu M."/>
            <person name="Harper D."/>
            <person name="Lindsay R."/>
            <person name="Hauser H."/>
            <person name="James K.D."/>
            <person name="Quiles M."/>
            <person name="Madan Babu M."/>
            <person name="Saito T."/>
            <person name="Buchrieser C."/>
            <person name="Wardroper A."/>
            <person name="Felder M."/>
            <person name="Thangavelu M."/>
            <person name="Johnson D."/>
            <person name="Knights A."/>
            <person name="Loulseged H."/>
            <person name="Mungall K.L."/>
            <person name="Oliver K."/>
            <person name="Price C."/>
            <person name="Quail M.A."/>
            <person name="Urushihara H."/>
            <person name="Hernandez J."/>
            <person name="Rabbinowitsch E."/>
            <person name="Steffen D."/>
            <person name="Sanders M."/>
            <person name="Ma J."/>
            <person name="Kohara Y."/>
            <person name="Sharp S."/>
            <person name="Simmonds M.N."/>
            <person name="Spiegler S."/>
            <person name="Tivey A."/>
            <person name="Sugano S."/>
            <person name="White B."/>
            <person name="Walker D."/>
            <person name="Woodward J.R."/>
            <person name="Winckler T."/>
            <person name="Tanaka Y."/>
            <person name="Shaulsky G."/>
            <person name="Schleicher M."/>
            <person name="Weinstock G.M."/>
            <person name="Rosenthal A."/>
            <person name="Cox E.C."/>
            <person name="Chisholm R.L."/>
            <person name="Gibbs R.A."/>
            <person name="Loomis W.F."/>
            <person name="Platzer M."/>
            <person name="Kay R.R."/>
            <person name="Williams J.G."/>
            <person name="Dear P.H."/>
            <person name="Noegel A.A."/>
            <person name="Barrell B.G."/>
            <person name="Kuspa A."/>
        </authorList>
    </citation>
    <scope>NUCLEOTIDE SEQUENCE [LARGE SCALE GENOMIC DNA]</scope>
    <source>
        <strain>AX4</strain>
    </source>
</reference>
<evidence type="ECO:0000250" key="1"/>
<evidence type="ECO:0000305" key="2"/>
<keyword id="KW-0489">Methyltransferase</keyword>
<keyword id="KW-1185">Reference proteome</keyword>
<keyword id="KW-0949">S-adenosyl-L-methionine</keyword>
<keyword id="KW-0808">Transferase</keyword>
<protein>
    <recommendedName>
        <fullName>Alpha N-terminal protein methyltransferase 1</fullName>
        <ecNumber>2.1.1.244</ecNumber>
    </recommendedName>
    <alternativeName>
        <fullName>X-Pro-Lys N-terminal protein methyltransferase 1</fullName>
        <shortName>NTM1</shortName>
    </alternativeName>
</protein>
<organism>
    <name type="scientific">Dictyostelium discoideum</name>
    <name type="common">Social amoeba</name>
    <dbReference type="NCBI Taxonomy" id="44689"/>
    <lineage>
        <taxon>Eukaryota</taxon>
        <taxon>Amoebozoa</taxon>
        <taxon>Evosea</taxon>
        <taxon>Eumycetozoa</taxon>
        <taxon>Dictyostelia</taxon>
        <taxon>Dictyosteliales</taxon>
        <taxon>Dictyosteliaceae</taxon>
        <taxon>Dictyostelium</taxon>
    </lineage>
</organism>
<proteinExistence type="inferred from homology"/>
<name>NTM1_DICDI</name>
<gene>
    <name type="ORF">DDB_G0269658</name>
</gene>
<accession>Q55DH6</accession>
<feature type="chain" id="PRO_0000399785" description="Alpha N-terminal protein methyltransferase 1">
    <location>
        <begin position="1"/>
        <end position="270"/>
    </location>
</feature>
<feature type="binding site" evidence="1">
    <location>
        <position position="114"/>
    </location>
    <ligand>
        <name>S-adenosyl-L-methionine</name>
        <dbReference type="ChEBI" id="CHEBI:59789"/>
    </ligand>
</feature>
<feature type="binding site" evidence="1">
    <location>
        <position position="119"/>
    </location>
    <ligand>
        <name>S-adenosyl-L-methionine</name>
        <dbReference type="ChEBI" id="CHEBI:59789"/>
    </ligand>
</feature>
<feature type="binding site" evidence="1">
    <location>
        <begin position="137"/>
        <end position="139"/>
    </location>
    <ligand>
        <name>S-adenosyl-L-methionine</name>
        <dbReference type="ChEBI" id="CHEBI:59789"/>
    </ligand>
</feature>
<feature type="binding site" evidence="1">
    <location>
        <begin position="165"/>
        <end position="166"/>
    </location>
    <ligand>
        <name>S-adenosyl-L-methionine</name>
        <dbReference type="ChEBI" id="CHEBI:59789"/>
    </ligand>
</feature>
<feature type="binding site" evidence="1">
    <location>
        <position position="180"/>
    </location>
    <ligand>
        <name>S-adenosyl-L-methionine</name>
        <dbReference type="ChEBI" id="CHEBI:59789"/>
    </ligand>
</feature>
<comment type="function">
    <text evidence="1">Alpha-N-methyltransferase that methylates the N-terminus of target proteins containing the N-terminal motif [Ala/Pro/Ser]-Pro-Lys when the initiator Met is cleaved. Specifically catalyzes mono-, di- or tri-methylation of exposed alpha-amino group of Ala or Ser residue in the [Ala/Ser]-Pro-Lys motif and mono- or di-methylation of Pro in the Pro-Pro-Lys motif (By similarity).</text>
</comment>
<comment type="catalytic activity">
    <reaction>
        <text>N-terminal L-alanyl-L-prolyl-L-lysyl-[protein] + 3 S-adenosyl-L-methionine = N-terminal N,N,N-trimethyl-L-alanyl-L-prolyl-L-lysyl-[protein] + 3 S-adenosyl-L-homocysteine + 3 H(+)</text>
        <dbReference type="Rhea" id="RHEA:54712"/>
        <dbReference type="Rhea" id="RHEA-COMP:13785"/>
        <dbReference type="Rhea" id="RHEA-COMP:13971"/>
        <dbReference type="ChEBI" id="CHEBI:15378"/>
        <dbReference type="ChEBI" id="CHEBI:57856"/>
        <dbReference type="ChEBI" id="CHEBI:59789"/>
        <dbReference type="ChEBI" id="CHEBI:138057"/>
        <dbReference type="ChEBI" id="CHEBI:138315"/>
        <dbReference type="EC" id="2.1.1.244"/>
    </reaction>
</comment>
<comment type="catalytic activity">
    <reaction>
        <text>N-terminal L-seryl-L-prolyl-L-lysyl-[protein] + 3 S-adenosyl-L-methionine = N-terminal N,N,N-trimethyl-L-seryl-L-prolyl-L-lysyl-[protein] + 3 S-adenosyl-L-homocysteine + 3 H(+)</text>
        <dbReference type="Rhea" id="RHEA:54724"/>
        <dbReference type="Rhea" id="RHEA-COMP:13789"/>
        <dbReference type="Rhea" id="RHEA-COMP:13973"/>
        <dbReference type="ChEBI" id="CHEBI:15378"/>
        <dbReference type="ChEBI" id="CHEBI:57856"/>
        <dbReference type="ChEBI" id="CHEBI:59789"/>
        <dbReference type="ChEBI" id="CHEBI:138061"/>
        <dbReference type="ChEBI" id="CHEBI:138317"/>
        <dbReference type="EC" id="2.1.1.244"/>
    </reaction>
</comment>
<comment type="catalytic activity">
    <reaction>
        <text>N-terminal L-prolyl-L-prolyl-L-lysyl-[protein] + 2 S-adenosyl-L-methionine = N-terminal N,N-dimethyl-L-prolyl-L-prolyl-L-lysyl-[protein] + 2 S-adenosyl-L-homocysteine + 2 H(+)</text>
        <dbReference type="Rhea" id="RHEA:54736"/>
        <dbReference type="Rhea" id="RHEA-COMP:13787"/>
        <dbReference type="Rhea" id="RHEA-COMP:13974"/>
        <dbReference type="ChEBI" id="CHEBI:15378"/>
        <dbReference type="ChEBI" id="CHEBI:57856"/>
        <dbReference type="ChEBI" id="CHEBI:59789"/>
        <dbReference type="ChEBI" id="CHEBI:138059"/>
        <dbReference type="ChEBI" id="CHEBI:138318"/>
        <dbReference type="EC" id="2.1.1.244"/>
    </reaction>
</comment>
<comment type="similarity">
    <text evidence="2">Belongs to the methyltransferase superfamily. NTM1 family.</text>
</comment>